<reference key="1">
    <citation type="journal article" date="2004" name="Proc. Natl. Acad. Sci. U.S.A.">
        <title>Complete genomes of two clinical Staphylococcus aureus strains: evidence for the rapid evolution of virulence and drug resistance.</title>
        <authorList>
            <person name="Holden M.T.G."/>
            <person name="Feil E.J."/>
            <person name="Lindsay J.A."/>
            <person name="Peacock S.J."/>
            <person name="Day N.P.J."/>
            <person name="Enright M.C."/>
            <person name="Foster T.J."/>
            <person name="Moore C.E."/>
            <person name="Hurst L."/>
            <person name="Atkin R."/>
            <person name="Barron A."/>
            <person name="Bason N."/>
            <person name="Bentley S.D."/>
            <person name="Chillingworth C."/>
            <person name="Chillingworth T."/>
            <person name="Churcher C."/>
            <person name="Clark L."/>
            <person name="Corton C."/>
            <person name="Cronin A."/>
            <person name="Doggett J."/>
            <person name="Dowd L."/>
            <person name="Feltwell T."/>
            <person name="Hance Z."/>
            <person name="Harris B."/>
            <person name="Hauser H."/>
            <person name="Holroyd S."/>
            <person name="Jagels K."/>
            <person name="James K.D."/>
            <person name="Lennard N."/>
            <person name="Line A."/>
            <person name="Mayes R."/>
            <person name="Moule S."/>
            <person name="Mungall K."/>
            <person name="Ormond D."/>
            <person name="Quail M.A."/>
            <person name="Rabbinowitsch E."/>
            <person name="Rutherford K.M."/>
            <person name="Sanders M."/>
            <person name="Sharp S."/>
            <person name="Simmonds M."/>
            <person name="Stevens K."/>
            <person name="Whitehead S."/>
            <person name="Barrell B.G."/>
            <person name="Spratt B.G."/>
            <person name="Parkhill J."/>
        </authorList>
    </citation>
    <scope>NUCLEOTIDE SEQUENCE [LARGE SCALE GENOMIC DNA]</scope>
    <source>
        <strain>MSSA476</strain>
    </source>
</reference>
<feature type="chain" id="PRO_0000101607" description="Ribosomal RNA small subunit methyltransferase A">
    <location>
        <begin position="1"/>
        <end position="297"/>
    </location>
</feature>
<feature type="binding site" evidence="1">
    <location>
        <position position="31"/>
    </location>
    <ligand>
        <name>S-adenosyl-L-methionine</name>
        <dbReference type="ChEBI" id="CHEBI:59789"/>
    </ligand>
</feature>
<feature type="binding site" evidence="1">
    <location>
        <position position="33"/>
    </location>
    <ligand>
        <name>S-adenosyl-L-methionine</name>
        <dbReference type="ChEBI" id="CHEBI:59789"/>
    </ligand>
</feature>
<feature type="binding site" evidence="1">
    <location>
        <position position="58"/>
    </location>
    <ligand>
        <name>S-adenosyl-L-methionine</name>
        <dbReference type="ChEBI" id="CHEBI:59789"/>
    </ligand>
</feature>
<feature type="binding site" evidence="1">
    <location>
        <position position="79"/>
    </location>
    <ligand>
        <name>S-adenosyl-L-methionine</name>
        <dbReference type="ChEBI" id="CHEBI:59789"/>
    </ligand>
</feature>
<feature type="binding site" evidence="1">
    <location>
        <position position="104"/>
    </location>
    <ligand>
        <name>S-adenosyl-L-methionine</name>
        <dbReference type="ChEBI" id="CHEBI:59789"/>
    </ligand>
</feature>
<feature type="binding site" evidence="1">
    <location>
        <position position="129"/>
    </location>
    <ligand>
        <name>S-adenosyl-L-methionine</name>
        <dbReference type="ChEBI" id="CHEBI:59789"/>
    </ligand>
</feature>
<comment type="function">
    <text evidence="1">Specifically dimethylates two adjacent adenosines (A1518 and A1519) in the loop of a conserved hairpin near the 3'-end of 16S rRNA in the 30S particle. May play a critical role in biogenesis of 30S subunits.</text>
</comment>
<comment type="catalytic activity">
    <reaction evidence="1">
        <text>adenosine(1518)/adenosine(1519) in 16S rRNA + 4 S-adenosyl-L-methionine = N(6)-dimethyladenosine(1518)/N(6)-dimethyladenosine(1519) in 16S rRNA + 4 S-adenosyl-L-homocysteine + 4 H(+)</text>
        <dbReference type="Rhea" id="RHEA:19609"/>
        <dbReference type="Rhea" id="RHEA-COMP:10232"/>
        <dbReference type="Rhea" id="RHEA-COMP:10233"/>
        <dbReference type="ChEBI" id="CHEBI:15378"/>
        <dbReference type="ChEBI" id="CHEBI:57856"/>
        <dbReference type="ChEBI" id="CHEBI:59789"/>
        <dbReference type="ChEBI" id="CHEBI:74411"/>
        <dbReference type="ChEBI" id="CHEBI:74493"/>
        <dbReference type="EC" id="2.1.1.182"/>
    </reaction>
</comment>
<comment type="subcellular location">
    <subcellularLocation>
        <location evidence="1">Cytoplasm</location>
    </subcellularLocation>
</comment>
<comment type="similarity">
    <text evidence="1">Belongs to the class I-like SAM-binding methyltransferase superfamily. rRNA adenine N(6)-methyltransferase family. RsmA subfamily.</text>
</comment>
<name>RSMA_STAAS</name>
<proteinExistence type="inferred from homology"/>
<dbReference type="EC" id="2.1.1.182" evidence="1"/>
<dbReference type="EMBL" id="BX571857">
    <property type="protein sequence ID" value="CAG42225.1"/>
    <property type="molecule type" value="Genomic_DNA"/>
</dbReference>
<dbReference type="RefSeq" id="WP_000886500.1">
    <property type="nucleotide sequence ID" value="NC_002953.3"/>
</dbReference>
<dbReference type="SMR" id="Q6GBZ5"/>
<dbReference type="KEGG" id="sas:SAS0450"/>
<dbReference type="HOGENOM" id="CLU_041220_0_0_9"/>
<dbReference type="GO" id="GO:0005829">
    <property type="term" value="C:cytosol"/>
    <property type="evidence" value="ECO:0007669"/>
    <property type="project" value="TreeGrafter"/>
</dbReference>
<dbReference type="GO" id="GO:0052908">
    <property type="term" value="F:16S rRNA (adenine(1518)-N(6)/adenine(1519)-N(6))-dimethyltransferase activity"/>
    <property type="evidence" value="ECO:0007669"/>
    <property type="project" value="UniProtKB-EC"/>
</dbReference>
<dbReference type="GO" id="GO:0003723">
    <property type="term" value="F:RNA binding"/>
    <property type="evidence" value="ECO:0007669"/>
    <property type="project" value="UniProtKB-KW"/>
</dbReference>
<dbReference type="CDD" id="cd02440">
    <property type="entry name" value="AdoMet_MTases"/>
    <property type="match status" value="1"/>
</dbReference>
<dbReference type="FunFam" id="1.10.8.100:FF:000002">
    <property type="entry name" value="Ribosomal RNA small subunit methyltransferase A"/>
    <property type="match status" value="1"/>
</dbReference>
<dbReference type="FunFam" id="3.40.50.150:FF:000023">
    <property type="entry name" value="Ribosomal RNA small subunit methyltransferase A"/>
    <property type="match status" value="1"/>
</dbReference>
<dbReference type="Gene3D" id="1.10.8.100">
    <property type="entry name" value="Ribosomal RNA adenine dimethylase-like, domain 2"/>
    <property type="match status" value="1"/>
</dbReference>
<dbReference type="Gene3D" id="3.40.50.150">
    <property type="entry name" value="Vaccinia Virus protein VP39"/>
    <property type="match status" value="1"/>
</dbReference>
<dbReference type="HAMAP" id="MF_00607">
    <property type="entry name" value="16SrRNA_methyltr_A"/>
    <property type="match status" value="1"/>
</dbReference>
<dbReference type="InterPro" id="IPR001737">
    <property type="entry name" value="KsgA/Erm"/>
</dbReference>
<dbReference type="InterPro" id="IPR023165">
    <property type="entry name" value="rRNA_Ade_diMease-like_C"/>
</dbReference>
<dbReference type="InterPro" id="IPR020596">
    <property type="entry name" value="rRNA_Ade_Mease_Trfase_CS"/>
</dbReference>
<dbReference type="InterPro" id="IPR020598">
    <property type="entry name" value="rRNA_Ade_methylase_Trfase_N"/>
</dbReference>
<dbReference type="InterPro" id="IPR011530">
    <property type="entry name" value="rRNA_adenine_dimethylase"/>
</dbReference>
<dbReference type="InterPro" id="IPR029063">
    <property type="entry name" value="SAM-dependent_MTases_sf"/>
</dbReference>
<dbReference type="NCBIfam" id="TIGR00755">
    <property type="entry name" value="ksgA"/>
    <property type="match status" value="1"/>
</dbReference>
<dbReference type="PANTHER" id="PTHR11727">
    <property type="entry name" value="DIMETHYLADENOSINE TRANSFERASE"/>
    <property type="match status" value="1"/>
</dbReference>
<dbReference type="PANTHER" id="PTHR11727:SF7">
    <property type="entry name" value="DIMETHYLADENOSINE TRANSFERASE-RELATED"/>
    <property type="match status" value="1"/>
</dbReference>
<dbReference type="Pfam" id="PF00398">
    <property type="entry name" value="RrnaAD"/>
    <property type="match status" value="1"/>
</dbReference>
<dbReference type="SMART" id="SM00650">
    <property type="entry name" value="rADc"/>
    <property type="match status" value="1"/>
</dbReference>
<dbReference type="SUPFAM" id="SSF53335">
    <property type="entry name" value="S-adenosyl-L-methionine-dependent methyltransferases"/>
    <property type="match status" value="1"/>
</dbReference>
<dbReference type="PROSITE" id="PS01131">
    <property type="entry name" value="RRNA_A_DIMETH"/>
    <property type="match status" value="1"/>
</dbReference>
<dbReference type="PROSITE" id="PS51689">
    <property type="entry name" value="SAM_RNA_A_N6_MT"/>
    <property type="match status" value="1"/>
</dbReference>
<organism>
    <name type="scientific">Staphylococcus aureus (strain MSSA476)</name>
    <dbReference type="NCBI Taxonomy" id="282459"/>
    <lineage>
        <taxon>Bacteria</taxon>
        <taxon>Bacillati</taxon>
        <taxon>Bacillota</taxon>
        <taxon>Bacilli</taxon>
        <taxon>Bacillales</taxon>
        <taxon>Staphylococcaceae</taxon>
        <taxon>Staphylococcus</taxon>
    </lineage>
</organism>
<gene>
    <name evidence="1" type="primary">rsmA</name>
    <name evidence="1" type="synonym">ksgA</name>
    <name type="ordered locus">SAS0450</name>
</gene>
<sequence length="297" mass="33738">MLDNKDIATPSRTRALLDKYGFNFKKSLGQNFLIDVNIINNIIDASDIDAQTGVIEIGPGMGSLTEQLARHAKRVLAFEIDQRLIPVLNDTLSPYDNVTVINEDILKANIKEAVENHLQDCEKIMVVANLPYYITTPILLNLMQQDIPIDGYVVMMQKEVGERLNAEVGSKAYGSLSIVVQYYTETSKVLTVPKSVFMPPPNVDSIVVKLMQRTEPLVTVDNEEAFFKLAKAAFAQRRKTINNNYQNYFKDGKQHKEVILQWLEQAGIDPRRRGETLSIQDFAKLYEEKKKFPQLEN</sequence>
<accession>Q6GBZ5</accession>
<keyword id="KW-0963">Cytoplasm</keyword>
<keyword id="KW-0489">Methyltransferase</keyword>
<keyword id="KW-0694">RNA-binding</keyword>
<keyword id="KW-0698">rRNA processing</keyword>
<keyword id="KW-0949">S-adenosyl-L-methionine</keyword>
<keyword id="KW-0808">Transferase</keyword>
<protein>
    <recommendedName>
        <fullName evidence="1">Ribosomal RNA small subunit methyltransferase A</fullName>
        <ecNumber evidence="1">2.1.1.182</ecNumber>
    </recommendedName>
    <alternativeName>
        <fullName evidence="1">16S rRNA (adenine(1518)-N(6)/adenine(1519)-N(6))-dimethyltransferase</fullName>
    </alternativeName>
    <alternativeName>
        <fullName evidence="1">16S rRNA dimethyladenosine transferase</fullName>
    </alternativeName>
    <alternativeName>
        <fullName evidence="1">16S rRNA dimethylase</fullName>
    </alternativeName>
    <alternativeName>
        <fullName evidence="1">S-adenosylmethionine-6-N', N'-adenosyl(rRNA) dimethyltransferase</fullName>
    </alternativeName>
</protein>
<evidence type="ECO:0000255" key="1">
    <source>
        <dbReference type="HAMAP-Rule" id="MF_00607"/>
    </source>
</evidence>